<reference key="1">
    <citation type="submission" date="2005-09" db="EMBL/GenBank/DDBJ databases">
        <title>Complete sequence of chromosome 1 of Rhodobacter sphaeroides 2.4.1.</title>
        <authorList>
            <person name="Copeland A."/>
            <person name="Lucas S."/>
            <person name="Lapidus A."/>
            <person name="Barry K."/>
            <person name="Detter J.C."/>
            <person name="Glavina T."/>
            <person name="Hammon N."/>
            <person name="Israni S."/>
            <person name="Pitluck S."/>
            <person name="Richardson P."/>
            <person name="Mackenzie C."/>
            <person name="Choudhary M."/>
            <person name="Larimer F."/>
            <person name="Hauser L.J."/>
            <person name="Land M."/>
            <person name="Donohue T.J."/>
            <person name="Kaplan S."/>
        </authorList>
    </citation>
    <scope>NUCLEOTIDE SEQUENCE [LARGE SCALE GENOMIC DNA]</scope>
    <source>
        <strain>ATCC 17023 / DSM 158 / JCM 6121 / CCUG 31486 / LMG 2827 / NBRC 12203 / NCIMB 8253 / ATH 2.4.1.</strain>
    </source>
</reference>
<name>CHEB2_CERS4</name>
<organism>
    <name type="scientific">Cereibacter sphaeroides (strain ATCC 17023 / DSM 158 / JCM 6121 / CCUG 31486 / LMG 2827 / NBRC 12203 / NCIMB 8253 / ATH 2.4.1.)</name>
    <name type="common">Rhodobacter sphaeroides</name>
    <dbReference type="NCBI Taxonomy" id="272943"/>
    <lineage>
        <taxon>Bacteria</taxon>
        <taxon>Pseudomonadati</taxon>
        <taxon>Pseudomonadota</taxon>
        <taxon>Alphaproteobacteria</taxon>
        <taxon>Rhodobacterales</taxon>
        <taxon>Paracoccaceae</taxon>
        <taxon>Cereibacter</taxon>
    </lineage>
</organism>
<sequence>MKVGNTLMAARAREGRTRVLIVDDSAMVRQALALGLSTDPRLEVVGTASGAEAARAQMAALKPDVVTLDLEMPQMDGLTFLRSYMESAPVPTVVISSLTRTSGETAMRAMEAGAVDIISKPSLGAGQGLPAIMRDVCARVWAAARARLAPPDGAAPAPVATGASEDWIHALGASTGGVQALSRILPFFPAQSPGLLVVQHMPEGFTAAFARRLDALCRMRVREAADGDLVLPGLVLIAPGGLRHMEIERAGGVCRVRLVAGAPVSYSRPSVDRMFLSLAAAAGPRVSAALLTGMGRDGAAGLLAIRRAGGRTFAQDEGSSAVFGMPLAARDLRAAEEILTLDDIPARMMLAAAADTRAPSLASND</sequence>
<proteinExistence type="inferred from homology"/>
<comment type="function">
    <text evidence="1">Involved in chemotaxis. Part of a chemotaxis signal transduction system that modulates chemotaxis in response to various stimuli. Catalyzes the demethylation of specific methylglutamate residues introduced into the chemoreceptors (methyl-accepting chemotaxis proteins or MCP) by CheR. Also mediates the irreversible deamidation of specific glutamine residues to glutamic acid.</text>
</comment>
<comment type="catalytic activity">
    <reaction evidence="1">
        <text>[protein]-L-glutamate 5-O-methyl ester + H2O = L-glutamyl-[protein] + methanol + H(+)</text>
        <dbReference type="Rhea" id="RHEA:23236"/>
        <dbReference type="Rhea" id="RHEA-COMP:10208"/>
        <dbReference type="Rhea" id="RHEA-COMP:10311"/>
        <dbReference type="ChEBI" id="CHEBI:15377"/>
        <dbReference type="ChEBI" id="CHEBI:15378"/>
        <dbReference type="ChEBI" id="CHEBI:17790"/>
        <dbReference type="ChEBI" id="CHEBI:29973"/>
        <dbReference type="ChEBI" id="CHEBI:82795"/>
        <dbReference type="EC" id="3.1.1.61"/>
    </reaction>
</comment>
<comment type="catalytic activity">
    <reaction evidence="1">
        <text>L-glutaminyl-[protein] + H2O = L-glutamyl-[protein] + NH4(+)</text>
        <dbReference type="Rhea" id="RHEA:16441"/>
        <dbReference type="Rhea" id="RHEA-COMP:10207"/>
        <dbReference type="Rhea" id="RHEA-COMP:10208"/>
        <dbReference type="ChEBI" id="CHEBI:15377"/>
        <dbReference type="ChEBI" id="CHEBI:28938"/>
        <dbReference type="ChEBI" id="CHEBI:29973"/>
        <dbReference type="ChEBI" id="CHEBI:30011"/>
        <dbReference type="EC" id="3.5.1.44"/>
    </reaction>
</comment>
<comment type="subcellular location">
    <subcellularLocation>
        <location evidence="1">Cytoplasm</location>
    </subcellularLocation>
</comment>
<comment type="domain">
    <text evidence="1">Contains a C-terminal catalytic domain, and an N-terminal region which modulates catalytic activity.</text>
</comment>
<comment type="PTM">
    <text evidence="1">Phosphorylated by CheA. Phosphorylation of the N-terminal regulatory domain activates the methylesterase activity.</text>
</comment>
<comment type="similarity">
    <text evidence="1">Belongs to the CheB family.</text>
</comment>
<evidence type="ECO:0000255" key="1">
    <source>
        <dbReference type="HAMAP-Rule" id="MF_00099"/>
    </source>
</evidence>
<feature type="chain" id="PRO_0000225482" description="Protein-glutamate methylesterase/protein-glutamine glutaminase 2">
    <location>
        <begin position="1"/>
        <end position="365"/>
    </location>
</feature>
<feature type="domain" description="Response regulatory" evidence="1">
    <location>
        <begin position="18"/>
        <end position="135"/>
    </location>
</feature>
<feature type="domain" description="CheB-type methylesterase" evidence="1">
    <location>
        <begin position="162"/>
        <end position="355"/>
    </location>
</feature>
<feature type="active site" evidence="1">
    <location>
        <position position="174"/>
    </location>
</feature>
<feature type="active site" evidence="1">
    <location>
        <position position="200"/>
    </location>
</feature>
<feature type="active site" evidence="1">
    <location>
        <position position="297"/>
    </location>
</feature>
<feature type="modified residue" description="4-aspartylphosphate" evidence="1">
    <location>
        <position position="69"/>
    </location>
</feature>
<protein>
    <recommendedName>
        <fullName evidence="1">Protein-glutamate methylesterase/protein-glutamine glutaminase 2</fullName>
        <ecNumber evidence="1">3.1.1.61</ecNumber>
        <ecNumber evidence="1">3.5.1.44</ecNumber>
    </recommendedName>
</protein>
<keyword id="KW-0145">Chemotaxis</keyword>
<keyword id="KW-0963">Cytoplasm</keyword>
<keyword id="KW-0378">Hydrolase</keyword>
<keyword id="KW-0597">Phosphoprotein</keyword>
<keyword id="KW-1185">Reference proteome</keyword>
<dbReference type="EC" id="3.1.1.61" evidence="1"/>
<dbReference type="EC" id="3.5.1.44" evidence="1"/>
<dbReference type="EMBL" id="CP000143">
    <property type="protein sequence ID" value="ABA79221.1"/>
    <property type="molecule type" value="Genomic_DNA"/>
</dbReference>
<dbReference type="RefSeq" id="WP_011337953.1">
    <property type="nucleotide sequence ID" value="NC_007493.2"/>
</dbReference>
<dbReference type="RefSeq" id="YP_353122.1">
    <property type="nucleotide sequence ID" value="NC_007493.2"/>
</dbReference>
<dbReference type="SMR" id="Q3J1W3"/>
<dbReference type="STRING" id="272943.RSP_0047"/>
<dbReference type="EnsemblBacteria" id="ABA79221">
    <property type="protein sequence ID" value="ABA79221"/>
    <property type="gene ID" value="RSP_0047"/>
</dbReference>
<dbReference type="GeneID" id="3719954"/>
<dbReference type="KEGG" id="rsp:RSP_0047"/>
<dbReference type="PATRIC" id="fig|272943.9.peg.1984"/>
<dbReference type="eggNOG" id="COG2201">
    <property type="taxonomic scope" value="Bacteria"/>
</dbReference>
<dbReference type="OrthoDB" id="9793421at2"/>
<dbReference type="PhylomeDB" id="Q3J1W3"/>
<dbReference type="Proteomes" id="UP000002703">
    <property type="component" value="Chromosome 1"/>
</dbReference>
<dbReference type="GO" id="GO:0005737">
    <property type="term" value="C:cytoplasm"/>
    <property type="evidence" value="ECO:0007669"/>
    <property type="project" value="UniProtKB-SubCell"/>
</dbReference>
<dbReference type="GO" id="GO:0000156">
    <property type="term" value="F:phosphorelay response regulator activity"/>
    <property type="evidence" value="ECO:0007669"/>
    <property type="project" value="InterPro"/>
</dbReference>
<dbReference type="GO" id="GO:0008984">
    <property type="term" value="F:protein-glutamate methylesterase activity"/>
    <property type="evidence" value="ECO:0007669"/>
    <property type="project" value="UniProtKB-UniRule"/>
</dbReference>
<dbReference type="GO" id="GO:0050568">
    <property type="term" value="F:protein-glutamine glutaminase activity"/>
    <property type="evidence" value="ECO:0007669"/>
    <property type="project" value="UniProtKB-UniRule"/>
</dbReference>
<dbReference type="GO" id="GO:0006935">
    <property type="term" value="P:chemotaxis"/>
    <property type="evidence" value="ECO:0007669"/>
    <property type="project" value="UniProtKB-UniRule"/>
</dbReference>
<dbReference type="CDD" id="cd16432">
    <property type="entry name" value="CheB_Rec"/>
    <property type="match status" value="1"/>
</dbReference>
<dbReference type="CDD" id="cd17541">
    <property type="entry name" value="REC_CheB-like"/>
    <property type="match status" value="1"/>
</dbReference>
<dbReference type="Gene3D" id="3.40.50.2300">
    <property type="match status" value="1"/>
</dbReference>
<dbReference type="Gene3D" id="3.40.50.180">
    <property type="entry name" value="Methylesterase CheB, C-terminal domain"/>
    <property type="match status" value="1"/>
</dbReference>
<dbReference type="HAMAP" id="MF_00099">
    <property type="entry name" value="CheB_chemtxs"/>
    <property type="match status" value="1"/>
</dbReference>
<dbReference type="InterPro" id="IPR008248">
    <property type="entry name" value="CheB-like"/>
</dbReference>
<dbReference type="InterPro" id="IPR035909">
    <property type="entry name" value="CheB_C"/>
</dbReference>
<dbReference type="InterPro" id="IPR011006">
    <property type="entry name" value="CheY-like_superfamily"/>
</dbReference>
<dbReference type="InterPro" id="IPR000673">
    <property type="entry name" value="Sig_transdc_resp-reg_Me-estase"/>
</dbReference>
<dbReference type="InterPro" id="IPR001789">
    <property type="entry name" value="Sig_transdc_resp-reg_receiver"/>
</dbReference>
<dbReference type="NCBIfam" id="NF001965">
    <property type="entry name" value="PRK00742.1"/>
    <property type="match status" value="1"/>
</dbReference>
<dbReference type="PANTHER" id="PTHR42872">
    <property type="entry name" value="PROTEIN-GLUTAMATE METHYLESTERASE/PROTEIN-GLUTAMINE GLUTAMINASE"/>
    <property type="match status" value="1"/>
</dbReference>
<dbReference type="PANTHER" id="PTHR42872:SF6">
    <property type="entry name" value="PROTEIN-GLUTAMATE METHYLESTERASE_PROTEIN-GLUTAMINE GLUTAMINASE"/>
    <property type="match status" value="1"/>
</dbReference>
<dbReference type="Pfam" id="PF01339">
    <property type="entry name" value="CheB_methylest"/>
    <property type="match status" value="1"/>
</dbReference>
<dbReference type="Pfam" id="PF00072">
    <property type="entry name" value="Response_reg"/>
    <property type="match status" value="1"/>
</dbReference>
<dbReference type="PIRSF" id="PIRSF000876">
    <property type="entry name" value="RR_chemtxs_CheB"/>
    <property type="match status" value="1"/>
</dbReference>
<dbReference type="SMART" id="SM00448">
    <property type="entry name" value="REC"/>
    <property type="match status" value="1"/>
</dbReference>
<dbReference type="SUPFAM" id="SSF52172">
    <property type="entry name" value="CheY-like"/>
    <property type="match status" value="1"/>
</dbReference>
<dbReference type="SUPFAM" id="SSF52738">
    <property type="entry name" value="Methylesterase CheB, C-terminal domain"/>
    <property type="match status" value="1"/>
</dbReference>
<dbReference type="PROSITE" id="PS50122">
    <property type="entry name" value="CHEB"/>
    <property type="match status" value="1"/>
</dbReference>
<dbReference type="PROSITE" id="PS50110">
    <property type="entry name" value="RESPONSE_REGULATORY"/>
    <property type="match status" value="1"/>
</dbReference>
<gene>
    <name evidence="1" type="primary">cheB2</name>
    <name type="ordered locus">RHOS4_16530</name>
    <name type="ORF">RSP_0047</name>
</gene>
<accession>Q3J1W3</accession>